<keyword id="KW-0030">Aminoacyl-tRNA synthetase</keyword>
<keyword id="KW-0067">ATP-binding</keyword>
<keyword id="KW-0963">Cytoplasm</keyword>
<keyword id="KW-0436">Ligase</keyword>
<keyword id="KW-0547">Nucleotide-binding</keyword>
<keyword id="KW-0648">Protein biosynthesis</keyword>
<keyword id="KW-1185">Reference proteome</keyword>
<feature type="chain" id="PRO_0000249154" description="Proline--tRNA ligase">
    <location>
        <begin position="1"/>
        <end position="472"/>
    </location>
</feature>
<name>SYP_UREPA</name>
<gene>
    <name evidence="1" type="primary">proS</name>
    <name type="ordered locus">UU452</name>
</gene>
<organism>
    <name type="scientific">Ureaplasma parvum serovar 3 (strain ATCC 700970)</name>
    <dbReference type="NCBI Taxonomy" id="273119"/>
    <lineage>
        <taxon>Bacteria</taxon>
        <taxon>Bacillati</taxon>
        <taxon>Mycoplasmatota</taxon>
        <taxon>Mycoplasmoidales</taxon>
        <taxon>Mycoplasmoidaceae</taxon>
        <taxon>Ureaplasma</taxon>
    </lineage>
</organism>
<protein>
    <recommendedName>
        <fullName evidence="1">Proline--tRNA ligase</fullName>
        <ecNumber evidence="1">6.1.1.15</ecNumber>
    </recommendedName>
    <alternativeName>
        <fullName evidence="1">Prolyl-tRNA synthetase</fullName>
        <shortName evidence="1">ProRS</shortName>
    </alternativeName>
</protein>
<dbReference type="EC" id="6.1.1.15" evidence="1"/>
<dbReference type="EMBL" id="AF222894">
    <property type="protein sequence ID" value="AAF30864.1"/>
    <property type="molecule type" value="Genomic_DNA"/>
</dbReference>
<dbReference type="RefSeq" id="WP_006688815.1">
    <property type="nucleotide sequence ID" value="NC_002162.1"/>
</dbReference>
<dbReference type="SMR" id="Q9PQ38"/>
<dbReference type="STRING" id="273119.UU452"/>
<dbReference type="EnsemblBacteria" id="AAF30864">
    <property type="protein sequence ID" value="AAF30864"/>
    <property type="gene ID" value="UU452"/>
</dbReference>
<dbReference type="GeneID" id="29672583"/>
<dbReference type="KEGG" id="uur:UU452"/>
<dbReference type="eggNOG" id="COG0441">
    <property type="taxonomic scope" value="Bacteria"/>
</dbReference>
<dbReference type="HOGENOM" id="CLU_001882_4_2_14"/>
<dbReference type="OrthoDB" id="9809052at2"/>
<dbReference type="Proteomes" id="UP000000423">
    <property type="component" value="Chromosome"/>
</dbReference>
<dbReference type="GO" id="GO:0017101">
    <property type="term" value="C:aminoacyl-tRNA synthetase multienzyme complex"/>
    <property type="evidence" value="ECO:0007669"/>
    <property type="project" value="TreeGrafter"/>
</dbReference>
<dbReference type="GO" id="GO:0005737">
    <property type="term" value="C:cytoplasm"/>
    <property type="evidence" value="ECO:0007669"/>
    <property type="project" value="UniProtKB-SubCell"/>
</dbReference>
<dbReference type="GO" id="GO:0005524">
    <property type="term" value="F:ATP binding"/>
    <property type="evidence" value="ECO:0007669"/>
    <property type="project" value="UniProtKB-UniRule"/>
</dbReference>
<dbReference type="GO" id="GO:0004827">
    <property type="term" value="F:proline-tRNA ligase activity"/>
    <property type="evidence" value="ECO:0007669"/>
    <property type="project" value="UniProtKB-UniRule"/>
</dbReference>
<dbReference type="GO" id="GO:0006433">
    <property type="term" value="P:prolyl-tRNA aminoacylation"/>
    <property type="evidence" value="ECO:0007669"/>
    <property type="project" value="UniProtKB-UniRule"/>
</dbReference>
<dbReference type="CDD" id="cd00778">
    <property type="entry name" value="ProRS_core_arch_euk"/>
    <property type="match status" value="1"/>
</dbReference>
<dbReference type="FunFam" id="3.30.930.10:FF:000037">
    <property type="entry name" value="Proline--tRNA ligase"/>
    <property type="match status" value="1"/>
</dbReference>
<dbReference type="Gene3D" id="3.40.50.800">
    <property type="entry name" value="Anticodon-binding domain"/>
    <property type="match status" value="1"/>
</dbReference>
<dbReference type="Gene3D" id="3.30.930.10">
    <property type="entry name" value="Bira Bifunctional Protein, Domain 2"/>
    <property type="match status" value="1"/>
</dbReference>
<dbReference type="Gene3D" id="3.30.110.30">
    <property type="entry name" value="C-terminal domain of ProRS"/>
    <property type="match status" value="1"/>
</dbReference>
<dbReference type="HAMAP" id="MF_01571">
    <property type="entry name" value="Pro_tRNA_synth_type3"/>
    <property type="match status" value="1"/>
</dbReference>
<dbReference type="InterPro" id="IPR002314">
    <property type="entry name" value="aa-tRNA-synt_IIb"/>
</dbReference>
<dbReference type="InterPro" id="IPR006195">
    <property type="entry name" value="aa-tRNA-synth_II"/>
</dbReference>
<dbReference type="InterPro" id="IPR045864">
    <property type="entry name" value="aa-tRNA-synth_II/BPL/LPL"/>
</dbReference>
<dbReference type="InterPro" id="IPR004154">
    <property type="entry name" value="Anticodon-bd"/>
</dbReference>
<dbReference type="InterPro" id="IPR036621">
    <property type="entry name" value="Anticodon-bd_dom_sf"/>
</dbReference>
<dbReference type="InterPro" id="IPR002316">
    <property type="entry name" value="Pro-tRNA-ligase_IIa"/>
</dbReference>
<dbReference type="InterPro" id="IPR004499">
    <property type="entry name" value="Pro-tRNA-ligase_IIa_arc-type"/>
</dbReference>
<dbReference type="InterPro" id="IPR016061">
    <property type="entry name" value="Pro-tRNA_ligase_II_C"/>
</dbReference>
<dbReference type="InterPro" id="IPR017449">
    <property type="entry name" value="Pro-tRNA_synth_II"/>
</dbReference>
<dbReference type="InterPro" id="IPR033721">
    <property type="entry name" value="ProRS_core_arch_euk"/>
</dbReference>
<dbReference type="NCBIfam" id="TIGR00408">
    <property type="entry name" value="proS_fam_I"/>
    <property type="match status" value="1"/>
</dbReference>
<dbReference type="PANTHER" id="PTHR43382:SF2">
    <property type="entry name" value="BIFUNCTIONAL GLUTAMATE_PROLINE--TRNA LIGASE"/>
    <property type="match status" value="1"/>
</dbReference>
<dbReference type="PANTHER" id="PTHR43382">
    <property type="entry name" value="PROLYL-TRNA SYNTHETASE"/>
    <property type="match status" value="1"/>
</dbReference>
<dbReference type="Pfam" id="PF03129">
    <property type="entry name" value="HGTP_anticodon"/>
    <property type="match status" value="1"/>
</dbReference>
<dbReference type="Pfam" id="PF09180">
    <property type="entry name" value="ProRS-C_1"/>
    <property type="match status" value="1"/>
</dbReference>
<dbReference type="Pfam" id="PF00587">
    <property type="entry name" value="tRNA-synt_2b"/>
    <property type="match status" value="1"/>
</dbReference>
<dbReference type="PRINTS" id="PR01046">
    <property type="entry name" value="TRNASYNTHPRO"/>
</dbReference>
<dbReference type="SMART" id="SM00946">
    <property type="entry name" value="ProRS-C_1"/>
    <property type="match status" value="1"/>
</dbReference>
<dbReference type="SUPFAM" id="SSF64586">
    <property type="entry name" value="C-terminal domain of ProRS"/>
    <property type="match status" value="1"/>
</dbReference>
<dbReference type="SUPFAM" id="SSF52954">
    <property type="entry name" value="Class II aaRS ABD-related"/>
    <property type="match status" value="1"/>
</dbReference>
<dbReference type="SUPFAM" id="SSF55681">
    <property type="entry name" value="Class II aaRS and biotin synthetases"/>
    <property type="match status" value="1"/>
</dbReference>
<dbReference type="PROSITE" id="PS50862">
    <property type="entry name" value="AA_TRNA_LIGASE_II"/>
    <property type="match status" value="1"/>
</dbReference>
<reference key="1">
    <citation type="journal article" date="2000" name="Nature">
        <title>The complete sequence of the mucosal pathogen Ureaplasma urealyticum.</title>
        <authorList>
            <person name="Glass J.I."/>
            <person name="Lefkowitz E.J."/>
            <person name="Glass J.S."/>
            <person name="Heiner C.R."/>
            <person name="Chen E.Y."/>
            <person name="Cassell G.H."/>
        </authorList>
    </citation>
    <scope>NUCLEOTIDE SEQUENCE [LARGE SCALE GENOMIC DNA]</scope>
    <source>
        <strain>ATCC 700970</strain>
    </source>
</reference>
<accession>Q9PQ38</accession>
<evidence type="ECO:0000255" key="1">
    <source>
        <dbReference type="HAMAP-Rule" id="MF_01571"/>
    </source>
</evidence>
<proteinExistence type="inferred from homology"/>
<sequence length="472" mass="54370">MSKKLEKITTRKENFADWYTSIVNNAKLIQYTDIKGMMVFQPNAWAIWEAIKNQIDVEFKKHGVRNLAMPTLIPLSEFQKEKDHIEGFAPELFMVNQIGDKKLDNSYAIRPTSEILFCNYFKNIVNSYNDLPIKNNQWCSVMRAEKTTRPFLRNAEFHWQELHAIFASENEADSFAKVILDVYTDFVQNYLCIPVIKGLKTPWERFAGAQKTYTIEAMMQDGQALQSATSHYLGQFFAKAYDIKFQGQDNQMHYVHQMSAGLSTRIIGALIMVHADDQGLILPPDIAFNQIAILTIFSNKNPQLLKISQQICEQLNNYRLFEDHSDKGIGYKLAQQEIEGTPICILVGAKELVNQQVVIVRRDTHEKINVDLTDLKLIIPKLLADIKRNIYEKAKKDLEDSIVFVNNIEELKQVIAQNKMAKAFFDGTKEDDEQIKLLTNASTRCIFDETQNGQCFYTNKKTNKLTLFARAY</sequence>
<comment type="function">
    <text evidence="1">Catalyzes the attachment of proline to tRNA(Pro) in a two-step reaction: proline is first activated by ATP to form Pro-AMP and then transferred to the acceptor end of tRNA(Pro).</text>
</comment>
<comment type="catalytic activity">
    <reaction evidence="1">
        <text>tRNA(Pro) + L-proline + ATP = L-prolyl-tRNA(Pro) + AMP + diphosphate</text>
        <dbReference type="Rhea" id="RHEA:14305"/>
        <dbReference type="Rhea" id="RHEA-COMP:9700"/>
        <dbReference type="Rhea" id="RHEA-COMP:9702"/>
        <dbReference type="ChEBI" id="CHEBI:30616"/>
        <dbReference type="ChEBI" id="CHEBI:33019"/>
        <dbReference type="ChEBI" id="CHEBI:60039"/>
        <dbReference type="ChEBI" id="CHEBI:78442"/>
        <dbReference type="ChEBI" id="CHEBI:78532"/>
        <dbReference type="ChEBI" id="CHEBI:456215"/>
        <dbReference type="EC" id="6.1.1.15"/>
    </reaction>
</comment>
<comment type="subunit">
    <text evidence="1">Homodimer.</text>
</comment>
<comment type="subcellular location">
    <subcellularLocation>
        <location evidence="1">Cytoplasm</location>
    </subcellularLocation>
</comment>
<comment type="domain">
    <text evidence="1">Consists of three domains: the N-terminal catalytic domain, the anticodon-binding domain and the C-terminal extension.</text>
</comment>
<comment type="similarity">
    <text evidence="1">Belongs to the class-II aminoacyl-tRNA synthetase family. ProS type 3 subfamily.</text>
</comment>